<evidence type="ECO:0000255" key="1">
    <source>
        <dbReference type="HAMAP-Rule" id="MF_00687"/>
    </source>
</evidence>
<comment type="function">
    <text evidence="1">Catalyzes the isomerization of 5-dehydro-4-deoxy-D-glucuronate to 3-deoxy-D-glycero-2,5-hexodiulosonate.</text>
</comment>
<comment type="catalytic activity">
    <reaction evidence="1">
        <text>5-dehydro-4-deoxy-D-glucuronate = 3-deoxy-D-glycero-2,5-hexodiulosonate</text>
        <dbReference type="Rhea" id="RHEA:23896"/>
        <dbReference type="ChEBI" id="CHEBI:17117"/>
        <dbReference type="ChEBI" id="CHEBI:29071"/>
        <dbReference type="EC" id="5.3.1.17"/>
    </reaction>
</comment>
<comment type="cofactor">
    <cofactor evidence="1">
        <name>Zn(2+)</name>
        <dbReference type="ChEBI" id="CHEBI:29105"/>
    </cofactor>
    <text evidence="1">Binds 1 zinc ion per subunit.</text>
</comment>
<comment type="pathway">
    <text evidence="1">Glycan metabolism; pectin degradation; 2-dehydro-3-deoxy-D-gluconate from pectin: step 4/5.</text>
</comment>
<comment type="similarity">
    <text evidence="1">Belongs to the KduI family.</text>
</comment>
<dbReference type="EC" id="5.3.1.17" evidence="1"/>
<dbReference type="EMBL" id="CP001600">
    <property type="protein sequence ID" value="ACR68978.1"/>
    <property type="molecule type" value="Genomic_DNA"/>
</dbReference>
<dbReference type="RefSeq" id="WP_015871126.1">
    <property type="nucleotide sequence ID" value="NZ_CP169062.1"/>
</dbReference>
<dbReference type="SMR" id="C5BFL5"/>
<dbReference type="STRING" id="67780.B6E78_02110"/>
<dbReference type="GeneID" id="69538762"/>
<dbReference type="KEGG" id="eic:NT01EI_1801"/>
<dbReference type="PATRIC" id="fig|634503.3.peg.1614"/>
<dbReference type="HOGENOM" id="CLU_062609_0_0_6"/>
<dbReference type="OrthoDB" id="9770644at2"/>
<dbReference type="UniPathway" id="UPA00545">
    <property type="reaction ID" value="UER00826"/>
</dbReference>
<dbReference type="Proteomes" id="UP000001485">
    <property type="component" value="Chromosome"/>
</dbReference>
<dbReference type="GO" id="GO:0008697">
    <property type="term" value="F:4-deoxy-L-threo-5-hexosulose-uronate ketol-isomerase activity"/>
    <property type="evidence" value="ECO:0007669"/>
    <property type="project" value="UniProtKB-UniRule"/>
</dbReference>
<dbReference type="GO" id="GO:0008270">
    <property type="term" value="F:zinc ion binding"/>
    <property type="evidence" value="ECO:0007669"/>
    <property type="project" value="UniProtKB-UniRule"/>
</dbReference>
<dbReference type="GO" id="GO:0019698">
    <property type="term" value="P:D-galacturonate catabolic process"/>
    <property type="evidence" value="ECO:0007669"/>
    <property type="project" value="TreeGrafter"/>
</dbReference>
<dbReference type="GO" id="GO:0042840">
    <property type="term" value="P:D-glucuronate catabolic process"/>
    <property type="evidence" value="ECO:0007669"/>
    <property type="project" value="TreeGrafter"/>
</dbReference>
<dbReference type="GO" id="GO:0045490">
    <property type="term" value="P:pectin catabolic process"/>
    <property type="evidence" value="ECO:0007669"/>
    <property type="project" value="UniProtKB-UniRule"/>
</dbReference>
<dbReference type="CDD" id="cd20491">
    <property type="entry name" value="cupin_KduI_C"/>
    <property type="match status" value="1"/>
</dbReference>
<dbReference type="CDD" id="cd20294">
    <property type="entry name" value="cupin_KduI_N"/>
    <property type="match status" value="1"/>
</dbReference>
<dbReference type="FunFam" id="2.60.120.10:FF:000018">
    <property type="entry name" value="4-deoxy-L-threo-5-hexosulose-uronate ketol-isomerase"/>
    <property type="match status" value="1"/>
</dbReference>
<dbReference type="FunFam" id="2.60.120.520:FF:000001">
    <property type="entry name" value="4-deoxy-L-threo-5-hexosulose-uronate ketol-isomerase"/>
    <property type="match status" value="1"/>
</dbReference>
<dbReference type="Gene3D" id="2.60.120.10">
    <property type="entry name" value="Jelly Rolls"/>
    <property type="match status" value="1"/>
</dbReference>
<dbReference type="Gene3D" id="2.60.120.520">
    <property type="entry name" value="pectin degrading enzyme 5-keto 4- deoxyuronate isomerase, domain 1"/>
    <property type="match status" value="1"/>
</dbReference>
<dbReference type="HAMAP" id="MF_00687">
    <property type="entry name" value="KduI"/>
    <property type="match status" value="1"/>
</dbReference>
<dbReference type="InterPro" id="IPR007045">
    <property type="entry name" value="KduI"/>
</dbReference>
<dbReference type="InterPro" id="IPR021120">
    <property type="entry name" value="KduI/IolB_isomerase"/>
</dbReference>
<dbReference type="InterPro" id="IPR027449">
    <property type="entry name" value="KduI_N"/>
</dbReference>
<dbReference type="InterPro" id="IPR014710">
    <property type="entry name" value="RmlC-like_jellyroll"/>
</dbReference>
<dbReference type="InterPro" id="IPR011051">
    <property type="entry name" value="RmlC_Cupin_sf"/>
</dbReference>
<dbReference type="NCBIfam" id="NF002091">
    <property type="entry name" value="PRK00924.1"/>
    <property type="match status" value="1"/>
</dbReference>
<dbReference type="PANTHER" id="PTHR38461">
    <property type="entry name" value="4-DEOXY-L-THREO-5-HEXOSULOSE-URONATE KETOL-ISOMERASE"/>
    <property type="match status" value="1"/>
</dbReference>
<dbReference type="PANTHER" id="PTHR38461:SF1">
    <property type="entry name" value="4-DEOXY-L-THREO-5-HEXOSULOSE-URONATE KETOL-ISOMERASE"/>
    <property type="match status" value="1"/>
</dbReference>
<dbReference type="Pfam" id="PF04962">
    <property type="entry name" value="KduI"/>
    <property type="match status" value="1"/>
</dbReference>
<dbReference type="PIRSF" id="PIRSF006625">
    <property type="entry name" value="KduI"/>
    <property type="match status" value="1"/>
</dbReference>
<dbReference type="SUPFAM" id="SSF51182">
    <property type="entry name" value="RmlC-like cupins"/>
    <property type="match status" value="1"/>
</dbReference>
<protein>
    <recommendedName>
        <fullName evidence="1">4-deoxy-L-threo-5-hexosulose-uronate ketol-isomerase</fullName>
        <ecNumber evidence="1">5.3.1.17</ecNumber>
    </recommendedName>
    <alternativeName>
        <fullName evidence="1">5-keto-4-deoxyuronate isomerase</fullName>
    </alternativeName>
    <alternativeName>
        <fullName evidence="1">DKI isomerase</fullName>
    </alternativeName>
</protein>
<organism>
    <name type="scientific">Edwardsiella ictaluri (strain 93-146)</name>
    <dbReference type="NCBI Taxonomy" id="634503"/>
    <lineage>
        <taxon>Bacteria</taxon>
        <taxon>Pseudomonadati</taxon>
        <taxon>Pseudomonadota</taxon>
        <taxon>Gammaproteobacteria</taxon>
        <taxon>Enterobacterales</taxon>
        <taxon>Hafniaceae</taxon>
        <taxon>Edwardsiella</taxon>
    </lineage>
</organism>
<sequence length="278" mass="31400">MEVRQSIHSDHAKQLDTAGLRREFLIDTVFDADRYTMVYSHIDRIIVGGIMPVTQSVSIGNEVGKQLGVGYFLERRELGVINIGGPGTIDVDGKCYEIGPREALYVGQGARDLRFASLDSACPAKFYYNCAPAHTHYPNRKITPAEVSPQTLGDTKSSNRRTINKYMVPEVLPTCQLSMGLTELEEGNLWNTMPCHTHERRMEVYFYFNMAPDSCVFHMMGEPQETRHIVMRNEQAVISPSWSIHSGVGTRAYTFIWGMVGENQVFDDMDHLAITDLR</sequence>
<feature type="chain" id="PRO_1000212561" description="4-deoxy-L-threo-5-hexosulose-uronate ketol-isomerase">
    <location>
        <begin position="1"/>
        <end position="278"/>
    </location>
</feature>
<feature type="binding site" evidence="1">
    <location>
        <position position="196"/>
    </location>
    <ligand>
        <name>Zn(2+)</name>
        <dbReference type="ChEBI" id="CHEBI:29105"/>
    </ligand>
</feature>
<feature type="binding site" evidence="1">
    <location>
        <position position="198"/>
    </location>
    <ligand>
        <name>Zn(2+)</name>
        <dbReference type="ChEBI" id="CHEBI:29105"/>
    </ligand>
</feature>
<feature type="binding site" evidence="1">
    <location>
        <position position="203"/>
    </location>
    <ligand>
        <name>Zn(2+)</name>
        <dbReference type="ChEBI" id="CHEBI:29105"/>
    </ligand>
</feature>
<feature type="binding site" evidence="1">
    <location>
        <position position="245"/>
    </location>
    <ligand>
        <name>Zn(2+)</name>
        <dbReference type="ChEBI" id="CHEBI:29105"/>
    </ligand>
</feature>
<accession>C5BFL5</accession>
<keyword id="KW-0413">Isomerase</keyword>
<keyword id="KW-0479">Metal-binding</keyword>
<keyword id="KW-0862">Zinc</keyword>
<gene>
    <name evidence="1" type="primary">kduI</name>
    <name type="ordered locus">NT01EI_1801</name>
</gene>
<proteinExistence type="inferred from homology"/>
<name>KDUI_EDWI9</name>
<reference key="1">
    <citation type="submission" date="2009-03" db="EMBL/GenBank/DDBJ databases">
        <title>Complete genome sequence of Edwardsiella ictaluri 93-146.</title>
        <authorList>
            <person name="Williams M.L."/>
            <person name="Gillaspy A.F."/>
            <person name="Dyer D.W."/>
            <person name="Thune R.L."/>
            <person name="Waldbieser G.C."/>
            <person name="Schuster S.C."/>
            <person name="Gipson J."/>
            <person name="Zaitshik J."/>
            <person name="Landry C."/>
            <person name="Lawrence M.L."/>
        </authorList>
    </citation>
    <scope>NUCLEOTIDE SEQUENCE [LARGE SCALE GENOMIC DNA]</scope>
    <source>
        <strain>93-146</strain>
    </source>
</reference>